<accession>O62952</accession>
<sequence length="142" mass="15914">MESMGNNSPGPEIRALARNIRMSAHKARKVINQIRGCSYGQALMILELMPYGACYPISQLIHSAAANANHNMGLNKANLLVSRVEVNEGAVFKRVQPRAQGRGYPIQKPTCHITIVLEEISRSNDPIMSIESRKRGYVWRRK</sequence>
<geneLocation type="chloroplast"/>
<feature type="chain" id="PRO_0000125320" description="Large ribosomal subunit protein uL22c">
    <location>
        <begin position="1"/>
        <end position="142"/>
    </location>
</feature>
<protein>
    <recommendedName>
        <fullName evidence="2">Large ribosomal subunit protein uL22c</fullName>
    </recommendedName>
    <alternativeName>
        <fullName>50S ribosomal protein L22, chloroplastic</fullName>
    </alternativeName>
</protein>
<comment type="function">
    <text evidence="1">This protein binds specifically to 23S rRNA.</text>
</comment>
<comment type="function">
    <text evidence="1">The globular domain of the protein is located near the polypeptide exit tunnel on the outside of the subunit, while an extended beta-hairpin is found that lines the wall of the exit tunnel in the center of the 70S ribosome.</text>
</comment>
<comment type="subunit">
    <text evidence="1">Part of the 50S ribosomal subunit.</text>
</comment>
<comment type="subcellular location">
    <subcellularLocation>
        <location>Plastid</location>
        <location>Chloroplast</location>
    </subcellularLocation>
</comment>
<comment type="similarity">
    <text evidence="2">Belongs to the universal ribosomal protein uL22 family.</text>
</comment>
<keyword id="KW-0150">Chloroplast</keyword>
<keyword id="KW-0934">Plastid</keyword>
<keyword id="KW-0687">Ribonucleoprotein</keyword>
<keyword id="KW-0689">Ribosomal protein</keyword>
<keyword id="KW-0694">RNA-binding</keyword>
<keyword id="KW-0699">rRNA-binding</keyword>
<proteinExistence type="inferred from homology"/>
<name>RK22_PICAB</name>
<evidence type="ECO:0000250" key="1"/>
<evidence type="ECO:0000305" key="2"/>
<gene>
    <name type="primary">rpl22</name>
</gene>
<organism>
    <name type="scientific">Picea abies</name>
    <name type="common">Norway spruce</name>
    <name type="synonym">Picea excelsa</name>
    <dbReference type="NCBI Taxonomy" id="3329"/>
    <lineage>
        <taxon>Eukaryota</taxon>
        <taxon>Viridiplantae</taxon>
        <taxon>Streptophyta</taxon>
        <taxon>Embryophyta</taxon>
        <taxon>Tracheophyta</taxon>
        <taxon>Spermatophyta</taxon>
        <taxon>Pinopsida</taxon>
        <taxon>Pinidae</taxon>
        <taxon>Conifers I</taxon>
        <taxon>Pinales</taxon>
        <taxon>Pinaceae</taxon>
        <taxon>Picea</taxon>
    </lineage>
</organism>
<dbReference type="EMBL" id="U92462">
    <property type="protein sequence ID" value="AAC95498.1"/>
    <property type="molecule type" value="Genomic_DNA"/>
</dbReference>
<dbReference type="PIR" id="T11808">
    <property type="entry name" value="T11808"/>
</dbReference>
<dbReference type="SMR" id="O62952"/>
<dbReference type="GO" id="GO:0009507">
    <property type="term" value="C:chloroplast"/>
    <property type="evidence" value="ECO:0007669"/>
    <property type="project" value="UniProtKB-SubCell"/>
</dbReference>
<dbReference type="GO" id="GO:0015934">
    <property type="term" value="C:large ribosomal subunit"/>
    <property type="evidence" value="ECO:0007669"/>
    <property type="project" value="InterPro"/>
</dbReference>
<dbReference type="GO" id="GO:0019843">
    <property type="term" value="F:rRNA binding"/>
    <property type="evidence" value="ECO:0007669"/>
    <property type="project" value="UniProtKB-UniRule"/>
</dbReference>
<dbReference type="GO" id="GO:0003735">
    <property type="term" value="F:structural constituent of ribosome"/>
    <property type="evidence" value="ECO:0007669"/>
    <property type="project" value="InterPro"/>
</dbReference>
<dbReference type="GO" id="GO:0006412">
    <property type="term" value="P:translation"/>
    <property type="evidence" value="ECO:0007669"/>
    <property type="project" value="UniProtKB-UniRule"/>
</dbReference>
<dbReference type="CDD" id="cd00336">
    <property type="entry name" value="Ribosomal_L22"/>
    <property type="match status" value="1"/>
</dbReference>
<dbReference type="Gene3D" id="3.90.470.10">
    <property type="entry name" value="Ribosomal protein L22/L17"/>
    <property type="match status" value="1"/>
</dbReference>
<dbReference type="HAMAP" id="MF_01331_B">
    <property type="entry name" value="Ribosomal_uL22_B"/>
    <property type="match status" value="1"/>
</dbReference>
<dbReference type="InterPro" id="IPR001063">
    <property type="entry name" value="Ribosomal_uL22"/>
</dbReference>
<dbReference type="InterPro" id="IPR005727">
    <property type="entry name" value="Ribosomal_uL22_bac/chlpt-type"/>
</dbReference>
<dbReference type="InterPro" id="IPR047867">
    <property type="entry name" value="Ribosomal_uL22_bac/org-type"/>
</dbReference>
<dbReference type="InterPro" id="IPR018260">
    <property type="entry name" value="Ribosomal_uL22_CS"/>
</dbReference>
<dbReference type="InterPro" id="IPR036394">
    <property type="entry name" value="Ribosomal_uL22_sf"/>
</dbReference>
<dbReference type="NCBIfam" id="TIGR01044">
    <property type="entry name" value="rplV_bact"/>
    <property type="match status" value="1"/>
</dbReference>
<dbReference type="PANTHER" id="PTHR13501">
    <property type="entry name" value="CHLOROPLAST 50S RIBOSOMAL PROTEIN L22-RELATED"/>
    <property type="match status" value="1"/>
</dbReference>
<dbReference type="PANTHER" id="PTHR13501:SF10">
    <property type="entry name" value="LARGE RIBOSOMAL SUBUNIT PROTEIN UL22M"/>
    <property type="match status" value="1"/>
</dbReference>
<dbReference type="Pfam" id="PF00237">
    <property type="entry name" value="Ribosomal_L22"/>
    <property type="match status" value="1"/>
</dbReference>
<dbReference type="SUPFAM" id="SSF54843">
    <property type="entry name" value="Ribosomal protein L22"/>
    <property type="match status" value="1"/>
</dbReference>
<dbReference type="PROSITE" id="PS00464">
    <property type="entry name" value="RIBOSOMAL_L22"/>
    <property type="match status" value="1"/>
</dbReference>
<reference key="1">
    <citation type="submission" date="1997-03" db="EMBL/GenBank/DDBJ databases">
        <authorList>
            <person name="Kluemper S."/>
            <person name="Kanka S."/>
            <person name="Riesner D."/>
            <person name="Etscheid M."/>
        </authorList>
    </citation>
    <scope>NUCLEOTIDE SEQUENCE [GENOMIC DNA]</scope>
</reference>